<dbReference type="EC" id="4.4.1.3" evidence="3"/>
<dbReference type="EMBL" id="CP000143">
    <property type="protein sequence ID" value="ABA77574.1"/>
    <property type="molecule type" value="Genomic_DNA"/>
</dbReference>
<dbReference type="RefSeq" id="WP_011336734.1">
    <property type="nucleotide sequence ID" value="NZ_CP030271.1"/>
</dbReference>
<dbReference type="RefSeq" id="YP_351475.1">
    <property type="nucleotide sequence ID" value="NC_007493.2"/>
</dbReference>
<dbReference type="SMR" id="Q3J6L0"/>
<dbReference type="STRING" id="272943.RSP_1433"/>
<dbReference type="EnsemblBacteria" id="ABA77574">
    <property type="protein sequence ID" value="ABA77574"/>
    <property type="gene ID" value="RSP_1433"/>
</dbReference>
<dbReference type="GeneID" id="3718800"/>
<dbReference type="KEGG" id="rsp:RSP_1433"/>
<dbReference type="PATRIC" id="fig|272943.9.peg.297"/>
<dbReference type="eggNOG" id="COG0662">
    <property type="taxonomic scope" value="Bacteria"/>
</dbReference>
<dbReference type="OrthoDB" id="9083851at2"/>
<dbReference type="Proteomes" id="UP000002703">
    <property type="component" value="Chromosome 1"/>
</dbReference>
<dbReference type="GO" id="GO:0047869">
    <property type="term" value="F:dimethylpropiothetin dethiomethylase activity"/>
    <property type="evidence" value="ECO:0007669"/>
    <property type="project" value="UniProtKB-EC"/>
</dbReference>
<dbReference type="GO" id="GO:0046872">
    <property type="term" value="F:metal ion binding"/>
    <property type="evidence" value="ECO:0007669"/>
    <property type="project" value="UniProtKB-KW"/>
</dbReference>
<dbReference type="Gene3D" id="2.60.120.10">
    <property type="entry name" value="Jelly Rolls"/>
    <property type="match status" value="1"/>
</dbReference>
<dbReference type="InterPro" id="IPR031723">
    <property type="entry name" value="DMSP_lyase"/>
</dbReference>
<dbReference type="InterPro" id="IPR014710">
    <property type="entry name" value="RmlC-like_jellyroll"/>
</dbReference>
<dbReference type="InterPro" id="IPR011051">
    <property type="entry name" value="RmlC_Cupin_sf"/>
</dbReference>
<dbReference type="Pfam" id="PF16867">
    <property type="entry name" value="DMSP_lyase"/>
    <property type="match status" value="1"/>
</dbReference>
<dbReference type="SUPFAM" id="SSF51182">
    <property type="entry name" value="RmlC-like cupins"/>
    <property type="match status" value="1"/>
</dbReference>
<gene>
    <name type="primary">dddL</name>
    <name type="ordered locus">RHOS4_00060</name>
    <name type="ORF">RSP_1433</name>
</gene>
<accession>Q3J6L0</accession>
<comment type="function">
    <text evidence="3 4">May cleave dimethylsulfoniopropionate (DMSP), releasing dimethyl sulfide (DMS). DMS is the principal form by which sulfur is transported from oceans to the atmosphere (PubMed:21249136). The real activity of the protein is however subject to debate and it is unclear whether it constitutes a real dimethylsulfoniopropionate lyase in vivo (Probable).</text>
</comment>
<comment type="catalytic activity">
    <reaction evidence="3">
        <text>S,S-dimethyl-beta-propiothetin = acrylate + dimethyl sulfide + H(+)</text>
        <dbReference type="Rhea" id="RHEA:19965"/>
        <dbReference type="ChEBI" id="CHEBI:15378"/>
        <dbReference type="ChEBI" id="CHEBI:16457"/>
        <dbReference type="ChEBI" id="CHEBI:17437"/>
        <dbReference type="ChEBI" id="CHEBI:37080"/>
        <dbReference type="EC" id="4.4.1.3"/>
    </reaction>
</comment>
<comment type="cofactor">
    <cofactor evidence="1">
        <name>a divalent metal cation</name>
        <dbReference type="ChEBI" id="CHEBI:60240"/>
    </cofactor>
</comment>
<comment type="subunit">
    <text evidence="1">Homodimer.</text>
</comment>
<comment type="induction">
    <text evidence="2">Weakly induced by acrylate and dimethylsulfoniopropionate (DMSP). Part of the acuR-acuI-dddL operon.</text>
</comment>
<comment type="miscellaneous">
    <text evidence="5">DMSP is used as an intracellular osmolyte, predator deterrent and antioxidant.</text>
</comment>
<comment type="similarity">
    <text evidence="4">Belongs to the non-heme iron-dependent dioxygenase family.</text>
</comment>
<evidence type="ECO:0000250" key="1">
    <source>
        <dbReference type="UniProtKB" id="D0CY60"/>
    </source>
</evidence>
<evidence type="ECO:0000269" key="2">
    <source>
    </source>
</evidence>
<evidence type="ECO:0000303" key="3">
    <source>
    </source>
</evidence>
<evidence type="ECO:0000305" key="4"/>
<evidence type="ECO:0000305" key="5">
    <source>
    </source>
</evidence>
<proteinExistence type="evidence at transcript level"/>
<organism>
    <name type="scientific">Cereibacter sphaeroides (strain ATCC 17023 / DSM 158 / JCM 6121 / CCUG 31486 / LMG 2827 / NBRC 12203 / NCIMB 8253 / ATH 2.4.1.)</name>
    <name type="common">Rhodobacter sphaeroides</name>
    <dbReference type="NCBI Taxonomy" id="272943"/>
    <lineage>
        <taxon>Bacteria</taxon>
        <taxon>Pseudomonadati</taxon>
        <taxon>Pseudomonadota</taxon>
        <taxon>Alphaproteobacteria</taxon>
        <taxon>Rhodobacterales</taxon>
        <taxon>Paracoccaceae</taxon>
        <taxon>Cereibacter</taxon>
    </lineage>
</organism>
<reference key="1">
    <citation type="submission" date="2005-09" db="EMBL/GenBank/DDBJ databases">
        <title>Complete sequence of chromosome 1 of Rhodobacter sphaeroides 2.4.1.</title>
        <authorList>
            <person name="Copeland A."/>
            <person name="Lucas S."/>
            <person name="Lapidus A."/>
            <person name="Barry K."/>
            <person name="Detter J.C."/>
            <person name="Glavina T."/>
            <person name="Hammon N."/>
            <person name="Israni S."/>
            <person name="Pitluck S."/>
            <person name="Richardson P."/>
            <person name="Mackenzie C."/>
            <person name="Choudhary M."/>
            <person name="Larimer F."/>
            <person name="Hauser L.J."/>
            <person name="Land M."/>
            <person name="Donohue T.J."/>
            <person name="Kaplan S."/>
        </authorList>
    </citation>
    <scope>NUCLEOTIDE SEQUENCE [LARGE SCALE GENOMIC DNA]</scope>
    <source>
        <strain>ATCC 17023 / DSM 158 / JCM 6121 / CCUG 31486 / LMG 2827 / NBRC 12203 / NCIMB 8253 / ATH 2.4.1.</strain>
    </source>
</reference>
<reference key="2">
    <citation type="journal article" date="2011" name="PLoS ONE">
        <title>Unusual regulation of a leaderless operon involved in the catabolism of dimethylsulfoniopropionate in Rhodobacter sphaeroides.</title>
        <authorList>
            <person name="Sullivan M.J."/>
            <person name="Curson A.R."/>
            <person name="Shearer N."/>
            <person name="Todd J.D."/>
            <person name="Green R.T."/>
            <person name="Johnston A.W."/>
        </authorList>
    </citation>
    <scope>POSSIBLE FUNCTION</scope>
    <scope>INDUCTION</scope>
    <source>
        <strain>ATCC 17023 / DSM 158 / JCM 6121 / CCUG 31486 / LMG 2827 / NBRC 12203 / NCIMB 8253 / ATH 2.4.1.</strain>
    </source>
</reference>
<keyword id="KW-0456">Lyase</keyword>
<keyword id="KW-0479">Metal-binding</keyword>
<keyword id="KW-1185">Reference proteome</keyword>
<protein>
    <recommendedName>
        <fullName>Putative dimethylsulfoniopropionate lyase DddL</fullName>
        <shortName>DMSP lyase</shortName>
        <ecNumber evidence="3">4.4.1.3</ecNumber>
    </recommendedName>
    <alternativeName>
        <fullName>Dimethylpropiothetin dethiomethylase</fullName>
    </alternativeName>
</protein>
<sequence>MHSLSERVEQLRLNDCPDWLYLLHEFDALYRQGSDGGSRPIRTHRKRVRDSLALIVEANPAVNDRPPEVKPVTAHLGRALDLGERGAVQGMSRALARVAGRLTWEYGYEKVPKALARKYAYCEILGPRGPICAERLILGFVLFAPSTTYPQHSHKDIEESYISVAGAWSENDAAVHAPGSLILNRPGLEHRITTGDLSPCLLAYAWTGSEERLNQPGMKLSSPRKARIEKGI</sequence>
<name>DDDL_CERS4</name>
<feature type="chain" id="PRO_0000420618" description="Putative dimethylsulfoniopropionate lyase DddL">
    <location>
        <begin position="1"/>
        <end position="232"/>
    </location>
</feature>
<feature type="binding site" evidence="1">
    <location>
        <position position="154"/>
    </location>
    <ligand>
        <name>a divalent metal cation</name>
        <dbReference type="ChEBI" id="CHEBI:60240"/>
    </ligand>
</feature>
<feature type="binding site" evidence="1">
    <location>
        <position position="159"/>
    </location>
    <ligand>
        <name>a divalent metal cation</name>
        <dbReference type="ChEBI" id="CHEBI:60240"/>
    </ligand>
</feature>
<feature type="binding site" evidence="1">
    <location>
        <position position="161"/>
    </location>
    <ligand>
        <name>a divalent metal cation</name>
        <dbReference type="ChEBI" id="CHEBI:60240"/>
    </ligand>
</feature>
<feature type="binding site" evidence="1">
    <location>
        <position position="190"/>
    </location>
    <ligand>
        <name>a divalent metal cation</name>
        <dbReference type="ChEBI" id="CHEBI:60240"/>
    </ligand>
</feature>